<keyword id="KW-0067">ATP-binding</keyword>
<keyword id="KW-0418">Kinase</keyword>
<keyword id="KW-0545">Nucleotide biosynthesis</keyword>
<keyword id="KW-0547">Nucleotide-binding</keyword>
<keyword id="KW-1185">Reference proteome</keyword>
<keyword id="KW-0808">Transferase</keyword>
<dbReference type="EC" id="2.7.4.9" evidence="1"/>
<dbReference type="EMBL" id="AP006627">
    <property type="protein sequence ID" value="BAD62593.1"/>
    <property type="molecule type" value="Genomic_DNA"/>
</dbReference>
<dbReference type="RefSeq" id="WP_011244914.1">
    <property type="nucleotide sequence ID" value="NC_006582.1"/>
</dbReference>
<dbReference type="SMR" id="Q5WLY2"/>
<dbReference type="STRING" id="66692.ABC0050"/>
<dbReference type="KEGG" id="bcl:ABC0050"/>
<dbReference type="eggNOG" id="COG0125">
    <property type="taxonomic scope" value="Bacteria"/>
</dbReference>
<dbReference type="HOGENOM" id="CLU_049131_0_2_9"/>
<dbReference type="OrthoDB" id="9774907at2"/>
<dbReference type="Proteomes" id="UP000001168">
    <property type="component" value="Chromosome"/>
</dbReference>
<dbReference type="GO" id="GO:0005829">
    <property type="term" value="C:cytosol"/>
    <property type="evidence" value="ECO:0007669"/>
    <property type="project" value="TreeGrafter"/>
</dbReference>
<dbReference type="GO" id="GO:0005524">
    <property type="term" value="F:ATP binding"/>
    <property type="evidence" value="ECO:0007669"/>
    <property type="project" value="UniProtKB-UniRule"/>
</dbReference>
<dbReference type="GO" id="GO:0004798">
    <property type="term" value="F:dTMP kinase activity"/>
    <property type="evidence" value="ECO:0007669"/>
    <property type="project" value="UniProtKB-UniRule"/>
</dbReference>
<dbReference type="GO" id="GO:0006233">
    <property type="term" value="P:dTDP biosynthetic process"/>
    <property type="evidence" value="ECO:0007669"/>
    <property type="project" value="InterPro"/>
</dbReference>
<dbReference type="GO" id="GO:0006235">
    <property type="term" value="P:dTTP biosynthetic process"/>
    <property type="evidence" value="ECO:0007669"/>
    <property type="project" value="UniProtKB-UniRule"/>
</dbReference>
<dbReference type="GO" id="GO:0006227">
    <property type="term" value="P:dUDP biosynthetic process"/>
    <property type="evidence" value="ECO:0007669"/>
    <property type="project" value="TreeGrafter"/>
</dbReference>
<dbReference type="CDD" id="cd01672">
    <property type="entry name" value="TMPK"/>
    <property type="match status" value="1"/>
</dbReference>
<dbReference type="FunFam" id="3.40.50.300:FF:000225">
    <property type="entry name" value="Thymidylate kinase"/>
    <property type="match status" value="1"/>
</dbReference>
<dbReference type="Gene3D" id="3.40.50.300">
    <property type="entry name" value="P-loop containing nucleotide triphosphate hydrolases"/>
    <property type="match status" value="1"/>
</dbReference>
<dbReference type="HAMAP" id="MF_00165">
    <property type="entry name" value="Thymidylate_kinase"/>
    <property type="match status" value="1"/>
</dbReference>
<dbReference type="InterPro" id="IPR027417">
    <property type="entry name" value="P-loop_NTPase"/>
</dbReference>
<dbReference type="InterPro" id="IPR039430">
    <property type="entry name" value="Thymidylate_kin-like_dom"/>
</dbReference>
<dbReference type="InterPro" id="IPR018095">
    <property type="entry name" value="Thymidylate_kin_CS"/>
</dbReference>
<dbReference type="InterPro" id="IPR018094">
    <property type="entry name" value="Thymidylate_kinase"/>
</dbReference>
<dbReference type="NCBIfam" id="TIGR00041">
    <property type="entry name" value="DTMP_kinase"/>
    <property type="match status" value="1"/>
</dbReference>
<dbReference type="PANTHER" id="PTHR10344">
    <property type="entry name" value="THYMIDYLATE KINASE"/>
    <property type="match status" value="1"/>
</dbReference>
<dbReference type="PANTHER" id="PTHR10344:SF4">
    <property type="entry name" value="UMP-CMP KINASE 2, MITOCHONDRIAL"/>
    <property type="match status" value="1"/>
</dbReference>
<dbReference type="Pfam" id="PF02223">
    <property type="entry name" value="Thymidylate_kin"/>
    <property type="match status" value="1"/>
</dbReference>
<dbReference type="SUPFAM" id="SSF52540">
    <property type="entry name" value="P-loop containing nucleoside triphosphate hydrolases"/>
    <property type="match status" value="1"/>
</dbReference>
<dbReference type="PROSITE" id="PS01331">
    <property type="entry name" value="THYMIDYLATE_KINASE"/>
    <property type="match status" value="1"/>
</dbReference>
<comment type="function">
    <text evidence="1">Phosphorylation of dTMP to form dTDP in both de novo and salvage pathways of dTTP synthesis.</text>
</comment>
<comment type="catalytic activity">
    <reaction evidence="1">
        <text>dTMP + ATP = dTDP + ADP</text>
        <dbReference type="Rhea" id="RHEA:13517"/>
        <dbReference type="ChEBI" id="CHEBI:30616"/>
        <dbReference type="ChEBI" id="CHEBI:58369"/>
        <dbReference type="ChEBI" id="CHEBI:63528"/>
        <dbReference type="ChEBI" id="CHEBI:456216"/>
        <dbReference type="EC" id="2.7.4.9"/>
    </reaction>
</comment>
<comment type="similarity">
    <text evidence="1">Belongs to the thymidylate kinase family.</text>
</comment>
<proteinExistence type="inferred from homology"/>
<feature type="chain" id="PRO_0000155237" description="Thymidylate kinase">
    <location>
        <begin position="1"/>
        <end position="213"/>
    </location>
</feature>
<feature type="binding site" evidence="1">
    <location>
        <begin position="11"/>
        <end position="18"/>
    </location>
    <ligand>
        <name>ATP</name>
        <dbReference type="ChEBI" id="CHEBI:30616"/>
    </ligand>
</feature>
<sequence>MKKGLFITVEGGEGAGKTTIINLVQEQLATQGYEVIRTREPGGVELAEQIRDLLLHTQGVEMDNRTEALLYAAARREHLIKKIVPALAEGALVLCDRYIDSSLVYQGHARGIGMEEVRAINGFAIETYMPDLTLYFDVEPEIGLERVQKDAVRSWNRLDQETLTFHKRVQEGYKKLLKAEPERIKAIDANRSFAEVFHDTMEEINRMLLSTKD</sequence>
<accession>Q5WLY2</accession>
<protein>
    <recommendedName>
        <fullName evidence="1">Thymidylate kinase</fullName>
        <ecNumber evidence="1">2.7.4.9</ecNumber>
    </recommendedName>
    <alternativeName>
        <fullName evidence="1">dTMP kinase</fullName>
    </alternativeName>
</protein>
<reference key="1">
    <citation type="submission" date="2003-10" db="EMBL/GenBank/DDBJ databases">
        <title>The complete genome sequence of the alkaliphilic Bacillus clausii KSM-K16.</title>
        <authorList>
            <person name="Takaki Y."/>
            <person name="Kageyama Y."/>
            <person name="Shimamura S."/>
            <person name="Suzuki H."/>
            <person name="Nishi S."/>
            <person name="Hatada Y."/>
            <person name="Kawai S."/>
            <person name="Ito S."/>
            <person name="Horikoshi K."/>
        </authorList>
    </citation>
    <scope>NUCLEOTIDE SEQUENCE [LARGE SCALE GENOMIC DNA]</scope>
    <source>
        <strain>KSM-K16</strain>
    </source>
</reference>
<name>KTHY_SHOC1</name>
<organism>
    <name type="scientific">Shouchella clausii (strain KSM-K16)</name>
    <name type="common">Alkalihalobacillus clausii</name>
    <dbReference type="NCBI Taxonomy" id="66692"/>
    <lineage>
        <taxon>Bacteria</taxon>
        <taxon>Bacillati</taxon>
        <taxon>Bacillota</taxon>
        <taxon>Bacilli</taxon>
        <taxon>Bacillales</taxon>
        <taxon>Bacillaceae</taxon>
        <taxon>Shouchella</taxon>
    </lineage>
</organism>
<evidence type="ECO:0000255" key="1">
    <source>
        <dbReference type="HAMAP-Rule" id="MF_00165"/>
    </source>
</evidence>
<gene>
    <name evidence="1" type="primary">tmk</name>
    <name type="ordered locus">ABC0050</name>
</gene>